<feature type="chain" id="PRO_0000335402" description="Ribosomal RNA small subunit methyltransferase G">
    <location>
        <begin position="1"/>
        <end position="214"/>
    </location>
</feature>
<feature type="binding site" evidence="1">
    <location>
        <position position="81"/>
    </location>
    <ligand>
        <name>S-adenosyl-L-methionine</name>
        <dbReference type="ChEBI" id="CHEBI:59789"/>
    </ligand>
</feature>
<feature type="binding site" evidence="1">
    <location>
        <position position="86"/>
    </location>
    <ligand>
        <name>S-adenosyl-L-methionine</name>
        <dbReference type="ChEBI" id="CHEBI:59789"/>
    </ligand>
</feature>
<feature type="binding site" evidence="1">
    <location>
        <begin position="132"/>
        <end position="133"/>
    </location>
    <ligand>
        <name>S-adenosyl-L-methionine</name>
        <dbReference type="ChEBI" id="CHEBI:59789"/>
    </ligand>
</feature>
<feature type="binding site" evidence="1">
    <location>
        <position position="147"/>
    </location>
    <ligand>
        <name>S-adenosyl-L-methionine</name>
        <dbReference type="ChEBI" id="CHEBI:59789"/>
    </ligand>
</feature>
<keyword id="KW-0963">Cytoplasm</keyword>
<keyword id="KW-0489">Methyltransferase</keyword>
<keyword id="KW-0698">rRNA processing</keyword>
<keyword id="KW-0949">S-adenosyl-L-methionine</keyword>
<keyword id="KW-0808">Transferase</keyword>
<dbReference type="EC" id="2.1.1.170" evidence="1"/>
<dbReference type="EMBL" id="CP000680">
    <property type="protein sequence ID" value="ABP87363.1"/>
    <property type="molecule type" value="Genomic_DNA"/>
</dbReference>
<dbReference type="SMR" id="A4Y197"/>
<dbReference type="STRING" id="399739.Pmen_4617"/>
<dbReference type="KEGG" id="pmy:Pmen_4617"/>
<dbReference type="PATRIC" id="fig|399739.8.peg.4682"/>
<dbReference type="eggNOG" id="COG0357">
    <property type="taxonomic scope" value="Bacteria"/>
</dbReference>
<dbReference type="HOGENOM" id="CLU_065341_2_0_6"/>
<dbReference type="OrthoDB" id="9808773at2"/>
<dbReference type="GO" id="GO:0005829">
    <property type="term" value="C:cytosol"/>
    <property type="evidence" value="ECO:0007669"/>
    <property type="project" value="TreeGrafter"/>
</dbReference>
<dbReference type="GO" id="GO:0070043">
    <property type="term" value="F:rRNA (guanine-N7-)-methyltransferase activity"/>
    <property type="evidence" value="ECO:0007669"/>
    <property type="project" value="UniProtKB-UniRule"/>
</dbReference>
<dbReference type="CDD" id="cd02440">
    <property type="entry name" value="AdoMet_MTases"/>
    <property type="match status" value="1"/>
</dbReference>
<dbReference type="Gene3D" id="3.40.50.150">
    <property type="entry name" value="Vaccinia Virus protein VP39"/>
    <property type="match status" value="1"/>
</dbReference>
<dbReference type="HAMAP" id="MF_00074">
    <property type="entry name" value="16SrRNA_methyltr_G"/>
    <property type="match status" value="1"/>
</dbReference>
<dbReference type="InterPro" id="IPR003682">
    <property type="entry name" value="rRNA_ssu_MeTfrase_G"/>
</dbReference>
<dbReference type="InterPro" id="IPR029063">
    <property type="entry name" value="SAM-dependent_MTases_sf"/>
</dbReference>
<dbReference type="NCBIfam" id="TIGR00138">
    <property type="entry name" value="rsmG_gidB"/>
    <property type="match status" value="1"/>
</dbReference>
<dbReference type="PANTHER" id="PTHR31760">
    <property type="entry name" value="S-ADENOSYL-L-METHIONINE-DEPENDENT METHYLTRANSFERASES SUPERFAMILY PROTEIN"/>
    <property type="match status" value="1"/>
</dbReference>
<dbReference type="PANTHER" id="PTHR31760:SF0">
    <property type="entry name" value="S-ADENOSYL-L-METHIONINE-DEPENDENT METHYLTRANSFERASES SUPERFAMILY PROTEIN"/>
    <property type="match status" value="1"/>
</dbReference>
<dbReference type="Pfam" id="PF02527">
    <property type="entry name" value="GidB"/>
    <property type="match status" value="1"/>
</dbReference>
<dbReference type="PIRSF" id="PIRSF003078">
    <property type="entry name" value="GidB"/>
    <property type="match status" value="1"/>
</dbReference>
<dbReference type="SUPFAM" id="SSF53335">
    <property type="entry name" value="S-adenosyl-L-methionine-dependent methyltransferases"/>
    <property type="match status" value="1"/>
</dbReference>
<proteinExistence type="inferred from homology"/>
<protein>
    <recommendedName>
        <fullName evidence="1">Ribosomal RNA small subunit methyltransferase G</fullName>
        <ecNumber evidence="1">2.1.1.170</ecNumber>
    </recommendedName>
    <alternativeName>
        <fullName evidence="1">16S rRNA 7-methylguanosine methyltransferase</fullName>
        <shortName evidence="1">16S rRNA m7G methyltransferase</shortName>
    </alternativeName>
</protein>
<accession>A4Y197</accession>
<reference key="1">
    <citation type="submission" date="2007-04" db="EMBL/GenBank/DDBJ databases">
        <title>Complete sequence of Pseudomonas mendocina ymp.</title>
        <authorList>
            <consortium name="US DOE Joint Genome Institute"/>
            <person name="Copeland A."/>
            <person name="Lucas S."/>
            <person name="Lapidus A."/>
            <person name="Barry K."/>
            <person name="Glavina del Rio T."/>
            <person name="Dalin E."/>
            <person name="Tice H."/>
            <person name="Pitluck S."/>
            <person name="Kiss H."/>
            <person name="Brettin T."/>
            <person name="Detter J.C."/>
            <person name="Bruce D."/>
            <person name="Han C."/>
            <person name="Schmutz J."/>
            <person name="Larimer F."/>
            <person name="Land M."/>
            <person name="Hauser L."/>
            <person name="Kyrpides N."/>
            <person name="Mikhailova N."/>
            <person name="Hersman L."/>
            <person name="Dubois J."/>
            <person name="Maurice P."/>
            <person name="Richardson P."/>
        </authorList>
    </citation>
    <scope>NUCLEOTIDE SEQUENCE [LARGE SCALE GENOMIC DNA]</scope>
    <source>
        <strain>ymp</strain>
    </source>
</reference>
<evidence type="ECO:0000255" key="1">
    <source>
        <dbReference type="HAMAP-Rule" id="MF_00074"/>
    </source>
</evidence>
<gene>
    <name evidence="1" type="primary">rsmG</name>
    <name type="ordered locus">Pmen_4617</name>
</gene>
<sequence>MSVTQRHAEELLQGARELGIELSERQQEQLLAYLGLLIKWNKAYNLTAVRDPDEMVSRHLLDSLSVVPFVAERGDNWLDVGSGGGMPGIPLAIMFPERRFTLLDSNGKKTRFLVQVKLELKLANLEVVHSRVETYRPEQPFDGISSRAFSSLQDFSDWTRHLGSADTHWLAMKGLHPGDELQALPADFRLDATHVLRVPGCQGQRHLLILRRSV</sequence>
<organism>
    <name type="scientific">Ectopseudomonas mendocina (strain ymp)</name>
    <name type="common">Pseudomonas mendocina</name>
    <dbReference type="NCBI Taxonomy" id="399739"/>
    <lineage>
        <taxon>Bacteria</taxon>
        <taxon>Pseudomonadati</taxon>
        <taxon>Pseudomonadota</taxon>
        <taxon>Gammaproteobacteria</taxon>
        <taxon>Pseudomonadales</taxon>
        <taxon>Pseudomonadaceae</taxon>
        <taxon>Ectopseudomonas</taxon>
    </lineage>
</organism>
<comment type="function">
    <text evidence="1">Specifically methylates the N7 position of guanine in position 527 of 16S rRNA.</text>
</comment>
<comment type="catalytic activity">
    <reaction evidence="1">
        <text>guanosine(527) in 16S rRNA + S-adenosyl-L-methionine = N(7)-methylguanosine(527) in 16S rRNA + S-adenosyl-L-homocysteine</text>
        <dbReference type="Rhea" id="RHEA:42732"/>
        <dbReference type="Rhea" id="RHEA-COMP:10209"/>
        <dbReference type="Rhea" id="RHEA-COMP:10210"/>
        <dbReference type="ChEBI" id="CHEBI:57856"/>
        <dbReference type="ChEBI" id="CHEBI:59789"/>
        <dbReference type="ChEBI" id="CHEBI:74269"/>
        <dbReference type="ChEBI" id="CHEBI:74480"/>
        <dbReference type="EC" id="2.1.1.170"/>
    </reaction>
</comment>
<comment type="subcellular location">
    <subcellularLocation>
        <location evidence="1">Cytoplasm</location>
    </subcellularLocation>
</comment>
<comment type="similarity">
    <text evidence="1">Belongs to the methyltransferase superfamily. RNA methyltransferase RsmG family.</text>
</comment>
<name>RSMG_ECTM1</name>